<protein>
    <recommendedName>
        <fullName evidence="1">ATP synthase subunit alpha</fullName>
        <ecNumber evidence="1">7.1.2.2</ecNumber>
    </recommendedName>
    <alternativeName>
        <fullName evidence="1">ATP synthase F1 sector subunit alpha</fullName>
    </alternativeName>
    <alternativeName>
        <fullName evidence="1">F-ATPase subunit alpha</fullName>
    </alternativeName>
</protein>
<dbReference type="EC" id="7.1.2.2" evidence="1"/>
<dbReference type="EMBL" id="CP000672">
    <property type="protein sequence ID" value="ABR00047.1"/>
    <property type="molecule type" value="Genomic_DNA"/>
</dbReference>
<dbReference type="SMR" id="A5UGZ1"/>
<dbReference type="KEGG" id="hiq:CGSHiGG_05660"/>
<dbReference type="HOGENOM" id="CLU_010091_2_1_6"/>
<dbReference type="Proteomes" id="UP000001990">
    <property type="component" value="Chromosome"/>
</dbReference>
<dbReference type="GO" id="GO:0005886">
    <property type="term" value="C:plasma membrane"/>
    <property type="evidence" value="ECO:0007669"/>
    <property type="project" value="UniProtKB-SubCell"/>
</dbReference>
<dbReference type="GO" id="GO:0045259">
    <property type="term" value="C:proton-transporting ATP synthase complex"/>
    <property type="evidence" value="ECO:0007669"/>
    <property type="project" value="UniProtKB-KW"/>
</dbReference>
<dbReference type="GO" id="GO:0043531">
    <property type="term" value="F:ADP binding"/>
    <property type="evidence" value="ECO:0007669"/>
    <property type="project" value="TreeGrafter"/>
</dbReference>
<dbReference type="GO" id="GO:0005524">
    <property type="term" value="F:ATP binding"/>
    <property type="evidence" value="ECO:0007669"/>
    <property type="project" value="UniProtKB-UniRule"/>
</dbReference>
<dbReference type="GO" id="GO:0046933">
    <property type="term" value="F:proton-transporting ATP synthase activity, rotational mechanism"/>
    <property type="evidence" value="ECO:0007669"/>
    <property type="project" value="UniProtKB-UniRule"/>
</dbReference>
<dbReference type="CDD" id="cd18113">
    <property type="entry name" value="ATP-synt_F1_alpha_C"/>
    <property type="match status" value="1"/>
</dbReference>
<dbReference type="CDD" id="cd18116">
    <property type="entry name" value="ATP-synt_F1_alpha_N"/>
    <property type="match status" value="1"/>
</dbReference>
<dbReference type="CDD" id="cd01132">
    <property type="entry name" value="F1-ATPase_alpha_CD"/>
    <property type="match status" value="1"/>
</dbReference>
<dbReference type="FunFam" id="1.20.150.20:FF:000001">
    <property type="entry name" value="ATP synthase subunit alpha"/>
    <property type="match status" value="1"/>
</dbReference>
<dbReference type="FunFam" id="2.40.30.20:FF:000001">
    <property type="entry name" value="ATP synthase subunit alpha"/>
    <property type="match status" value="1"/>
</dbReference>
<dbReference type="FunFam" id="3.40.50.300:FF:000002">
    <property type="entry name" value="ATP synthase subunit alpha"/>
    <property type="match status" value="1"/>
</dbReference>
<dbReference type="Gene3D" id="2.40.30.20">
    <property type="match status" value="1"/>
</dbReference>
<dbReference type="Gene3D" id="1.20.150.20">
    <property type="entry name" value="ATP synthase alpha/beta chain, C-terminal domain"/>
    <property type="match status" value="1"/>
</dbReference>
<dbReference type="Gene3D" id="3.40.50.300">
    <property type="entry name" value="P-loop containing nucleotide triphosphate hydrolases"/>
    <property type="match status" value="1"/>
</dbReference>
<dbReference type="HAMAP" id="MF_01346">
    <property type="entry name" value="ATP_synth_alpha_bact"/>
    <property type="match status" value="1"/>
</dbReference>
<dbReference type="InterPro" id="IPR023366">
    <property type="entry name" value="ATP_synth_asu-like_sf"/>
</dbReference>
<dbReference type="InterPro" id="IPR000793">
    <property type="entry name" value="ATP_synth_asu_C"/>
</dbReference>
<dbReference type="InterPro" id="IPR038376">
    <property type="entry name" value="ATP_synth_asu_C_sf"/>
</dbReference>
<dbReference type="InterPro" id="IPR033732">
    <property type="entry name" value="ATP_synth_F1_a_nt-bd_dom"/>
</dbReference>
<dbReference type="InterPro" id="IPR005294">
    <property type="entry name" value="ATP_synth_F1_asu"/>
</dbReference>
<dbReference type="InterPro" id="IPR020003">
    <property type="entry name" value="ATPase_a/bsu_AS"/>
</dbReference>
<dbReference type="InterPro" id="IPR004100">
    <property type="entry name" value="ATPase_F1/V1/A1_a/bsu_N"/>
</dbReference>
<dbReference type="InterPro" id="IPR036121">
    <property type="entry name" value="ATPase_F1/V1/A1_a/bsu_N_sf"/>
</dbReference>
<dbReference type="InterPro" id="IPR000194">
    <property type="entry name" value="ATPase_F1/V1/A1_a/bsu_nucl-bd"/>
</dbReference>
<dbReference type="InterPro" id="IPR027417">
    <property type="entry name" value="P-loop_NTPase"/>
</dbReference>
<dbReference type="NCBIfam" id="TIGR00962">
    <property type="entry name" value="atpA"/>
    <property type="match status" value="1"/>
</dbReference>
<dbReference type="NCBIfam" id="NF009884">
    <property type="entry name" value="PRK13343.1"/>
    <property type="match status" value="1"/>
</dbReference>
<dbReference type="PANTHER" id="PTHR48082">
    <property type="entry name" value="ATP SYNTHASE SUBUNIT ALPHA, MITOCHONDRIAL"/>
    <property type="match status" value="1"/>
</dbReference>
<dbReference type="PANTHER" id="PTHR48082:SF2">
    <property type="entry name" value="ATP SYNTHASE SUBUNIT ALPHA, MITOCHONDRIAL"/>
    <property type="match status" value="1"/>
</dbReference>
<dbReference type="Pfam" id="PF00006">
    <property type="entry name" value="ATP-synt_ab"/>
    <property type="match status" value="1"/>
</dbReference>
<dbReference type="Pfam" id="PF00306">
    <property type="entry name" value="ATP-synt_ab_C"/>
    <property type="match status" value="1"/>
</dbReference>
<dbReference type="Pfam" id="PF02874">
    <property type="entry name" value="ATP-synt_ab_N"/>
    <property type="match status" value="1"/>
</dbReference>
<dbReference type="PIRSF" id="PIRSF039088">
    <property type="entry name" value="F_ATPase_subunit_alpha"/>
    <property type="match status" value="1"/>
</dbReference>
<dbReference type="SUPFAM" id="SSF47917">
    <property type="entry name" value="C-terminal domain of alpha and beta subunits of F1 ATP synthase"/>
    <property type="match status" value="1"/>
</dbReference>
<dbReference type="SUPFAM" id="SSF50615">
    <property type="entry name" value="N-terminal domain of alpha and beta subunits of F1 ATP synthase"/>
    <property type="match status" value="1"/>
</dbReference>
<dbReference type="SUPFAM" id="SSF52540">
    <property type="entry name" value="P-loop containing nucleoside triphosphate hydrolases"/>
    <property type="match status" value="1"/>
</dbReference>
<dbReference type="PROSITE" id="PS00152">
    <property type="entry name" value="ATPASE_ALPHA_BETA"/>
    <property type="match status" value="1"/>
</dbReference>
<proteinExistence type="inferred from homology"/>
<reference key="1">
    <citation type="journal article" date="2007" name="Genome Biol.">
        <title>Characterization and modeling of the Haemophilus influenzae core and supragenomes based on the complete genomic sequences of Rd and 12 clinical nontypeable strains.</title>
        <authorList>
            <person name="Hogg J.S."/>
            <person name="Hu F.Z."/>
            <person name="Janto B."/>
            <person name="Boissy R."/>
            <person name="Hayes J."/>
            <person name="Keefe R."/>
            <person name="Post J.C."/>
            <person name="Ehrlich G.D."/>
        </authorList>
    </citation>
    <scope>NUCLEOTIDE SEQUENCE [LARGE SCALE GENOMIC DNA]</scope>
    <source>
        <strain>PittGG</strain>
    </source>
</reference>
<comment type="function">
    <text evidence="1">Produces ATP from ADP in the presence of a proton gradient across the membrane. The alpha chain is a regulatory subunit.</text>
</comment>
<comment type="catalytic activity">
    <reaction evidence="1">
        <text>ATP + H2O + 4 H(+)(in) = ADP + phosphate + 5 H(+)(out)</text>
        <dbReference type="Rhea" id="RHEA:57720"/>
        <dbReference type="ChEBI" id="CHEBI:15377"/>
        <dbReference type="ChEBI" id="CHEBI:15378"/>
        <dbReference type="ChEBI" id="CHEBI:30616"/>
        <dbReference type="ChEBI" id="CHEBI:43474"/>
        <dbReference type="ChEBI" id="CHEBI:456216"/>
        <dbReference type="EC" id="7.1.2.2"/>
    </reaction>
</comment>
<comment type="subunit">
    <text evidence="1">F-type ATPases have 2 components, CF(1) - the catalytic core - and CF(0) - the membrane proton channel. CF(1) has five subunits: alpha(3), beta(3), gamma(1), delta(1), epsilon(1). CF(0) has three main subunits: a(1), b(2) and c(9-12). The alpha and beta chains form an alternating ring which encloses part of the gamma chain. CF(1) is attached to CF(0) by a central stalk formed by the gamma and epsilon chains, while a peripheral stalk is formed by the delta and b chains.</text>
</comment>
<comment type="subcellular location">
    <subcellularLocation>
        <location evidence="1">Cell inner membrane</location>
        <topology evidence="1">Peripheral membrane protein</topology>
    </subcellularLocation>
</comment>
<comment type="similarity">
    <text evidence="1">Belongs to the ATPase alpha/beta chains family.</text>
</comment>
<evidence type="ECO:0000255" key="1">
    <source>
        <dbReference type="HAMAP-Rule" id="MF_01346"/>
    </source>
</evidence>
<gene>
    <name evidence="1" type="primary">atpA</name>
    <name type="ordered locus">CGSHiGG_05660</name>
</gene>
<sequence>MQLNSTEISELIKKRIAQFDVVSEARNTGTIVSVSDGIIRIHGLSDVMQGEMIALPGNRYAMALNLERDSVGAVVMGPYADLAEGMEVQCTGRILEVPVGRGLLGRVVNTLGQPIDGKGEIDNDGFSPVEVIAPGVIDRRSVDQPVQTGYKAVDSMVPIGRGQRELIIGDRQTGKTALAIDAIINQRNSGIKCIYVAIGQKASTIANVVRKLEEHGALANTIVVAASASESAALQYLAPYAGCAMGEYFRDRGEDALIVYDDLSKQAVAYRQISLLLRRPPGREAYPGDVFYLHSRLLERASRVNEDYVEKFTKGEVKGKTGSLTALPIIETQAGDVSAFVPTNVISITDGQIFLESNLFNSGIRPAVNPGISVSRVGGSAQTKVIKKLAGGIRTALAQYRELAAFAQFASDLDDATRKQLSHGEKVTELLKQKQFAPLSVAEQAVILFAVEFGYLDDVELSKIASFETALLDYSNRNHAEFMQELNKTGNYNDEIKDTLKSILDGFKANSAW</sequence>
<name>ATPA_HAEIG</name>
<feature type="chain" id="PRO_1000055068" description="ATP synthase subunit alpha">
    <location>
        <begin position="1"/>
        <end position="513"/>
    </location>
</feature>
<feature type="binding site" evidence="1">
    <location>
        <begin position="169"/>
        <end position="176"/>
    </location>
    <ligand>
        <name>ATP</name>
        <dbReference type="ChEBI" id="CHEBI:30616"/>
    </ligand>
</feature>
<feature type="site" description="Required for activity" evidence="1">
    <location>
        <position position="373"/>
    </location>
</feature>
<organism>
    <name type="scientific">Haemophilus influenzae (strain PittGG)</name>
    <dbReference type="NCBI Taxonomy" id="374931"/>
    <lineage>
        <taxon>Bacteria</taxon>
        <taxon>Pseudomonadati</taxon>
        <taxon>Pseudomonadota</taxon>
        <taxon>Gammaproteobacteria</taxon>
        <taxon>Pasteurellales</taxon>
        <taxon>Pasteurellaceae</taxon>
        <taxon>Haemophilus</taxon>
    </lineage>
</organism>
<keyword id="KW-0066">ATP synthesis</keyword>
<keyword id="KW-0067">ATP-binding</keyword>
<keyword id="KW-0997">Cell inner membrane</keyword>
<keyword id="KW-1003">Cell membrane</keyword>
<keyword id="KW-0139">CF(1)</keyword>
<keyword id="KW-0375">Hydrogen ion transport</keyword>
<keyword id="KW-0406">Ion transport</keyword>
<keyword id="KW-0472">Membrane</keyword>
<keyword id="KW-0547">Nucleotide-binding</keyword>
<keyword id="KW-1278">Translocase</keyword>
<keyword id="KW-0813">Transport</keyword>
<accession>A5UGZ1</accession>